<reference key="1">
    <citation type="journal article" date="2012" name="BMC Genomics">
        <title>Comparative genomics and transcriptomics of lineages I, II, and III strains of Listeria monocytogenes.</title>
        <authorList>
            <person name="Hain T."/>
            <person name="Ghai R."/>
            <person name="Billion A."/>
            <person name="Kuenne C.T."/>
            <person name="Steinweg C."/>
            <person name="Izar B."/>
            <person name="Mohamed W."/>
            <person name="Mraheil M."/>
            <person name="Domann E."/>
            <person name="Schaffrath S."/>
            <person name="Karst U."/>
            <person name="Goesmann A."/>
            <person name="Oehm S."/>
            <person name="Puhler A."/>
            <person name="Merkl R."/>
            <person name="Vorwerk S."/>
            <person name="Glaser P."/>
            <person name="Garrido P."/>
            <person name="Rusniok C."/>
            <person name="Buchrieser C."/>
            <person name="Goebel W."/>
            <person name="Chakraborty T."/>
        </authorList>
    </citation>
    <scope>NUCLEOTIDE SEQUENCE [LARGE SCALE GENOMIC DNA]</scope>
    <source>
        <strain>CLIP80459</strain>
    </source>
</reference>
<gene>
    <name evidence="1" type="primary">thyA</name>
    <name type="ordered locus">Lm4b_01891</name>
</gene>
<organism>
    <name type="scientific">Listeria monocytogenes serotype 4b (strain CLIP80459)</name>
    <dbReference type="NCBI Taxonomy" id="568819"/>
    <lineage>
        <taxon>Bacteria</taxon>
        <taxon>Bacillati</taxon>
        <taxon>Bacillota</taxon>
        <taxon>Bacilli</taxon>
        <taxon>Bacillales</taxon>
        <taxon>Listeriaceae</taxon>
        <taxon>Listeria</taxon>
    </lineage>
</organism>
<evidence type="ECO:0000255" key="1">
    <source>
        <dbReference type="HAMAP-Rule" id="MF_00008"/>
    </source>
</evidence>
<dbReference type="EC" id="2.1.1.45" evidence="1"/>
<dbReference type="EMBL" id="FM242711">
    <property type="protein sequence ID" value="CAS05649.1"/>
    <property type="molecule type" value="Genomic_DNA"/>
</dbReference>
<dbReference type="RefSeq" id="WP_012681358.1">
    <property type="nucleotide sequence ID" value="NC_012488.1"/>
</dbReference>
<dbReference type="SMR" id="C1KWH4"/>
<dbReference type="KEGG" id="lmc:Lm4b_01891"/>
<dbReference type="HOGENOM" id="CLU_021669_0_0_9"/>
<dbReference type="UniPathway" id="UPA00575"/>
<dbReference type="GO" id="GO:0005829">
    <property type="term" value="C:cytosol"/>
    <property type="evidence" value="ECO:0007669"/>
    <property type="project" value="TreeGrafter"/>
</dbReference>
<dbReference type="GO" id="GO:0004799">
    <property type="term" value="F:thymidylate synthase activity"/>
    <property type="evidence" value="ECO:0007669"/>
    <property type="project" value="UniProtKB-UniRule"/>
</dbReference>
<dbReference type="GO" id="GO:0006231">
    <property type="term" value="P:dTMP biosynthetic process"/>
    <property type="evidence" value="ECO:0007669"/>
    <property type="project" value="UniProtKB-UniRule"/>
</dbReference>
<dbReference type="GO" id="GO:0006235">
    <property type="term" value="P:dTTP biosynthetic process"/>
    <property type="evidence" value="ECO:0007669"/>
    <property type="project" value="UniProtKB-UniRule"/>
</dbReference>
<dbReference type="GO" id="GO:0032259">
    <property type="term" value="P:methylation"/>
    <property type="evidence" value="ECO:0007669"/>
    <property type="project" value="UniProtKB-KW"/>
</dbReference>
<dbReference type="CDD" id="cd00351">
    <property type="entry name" value="TS_Pyrimidine_HMase"/>
    <property type="match status" value="1"/>
</dbReference>
<dbReference type="Gene3D" id="3.30.572.10">
    <property type="entry name" value="Thymidylate synthase/dCMP hydroxymethylase domain"/>
    <property type="match status" value="1"/>
</dbReference>
<dbReference type="HAMAP" id="MF_00008">
    <property type="entry name" value="Thymidy_synth_bact"/>
    <property type="match status" value="1"/>
</dbReference>
<dbReference type="InterPro" id="IPR045097">
    <property type="entry name" value="Thymidate_synth/dCMP_Mease"/>
</dbReference>
<dbReference type="InterPro" id="IPR023451">
    <property type="entry name" value="Thymidate_synth/dCMP_Mease_dom"/>
</dbReference>
<dbReference type="InterPro" id="IPR036926">
    <property type="entry name" value="Thymidate_synth/dCMP_Mease_sf"/>
</dbReference>
<dbReference type="InterPro" id="IPR000398">
    <property type="entry name" value="Thymidylate_synthase"/>
</dbReference>
<dbReference type="InterPro" id="IPR020940">
    <property type="entry name" value="Thymidylate_synthase_AS"/>
</dbReference>
<dbReference type="NCBIfam" id="NF002496">
    <property type="entry name" value="PRK01827.1-2"/>
    <property type="match status" value="1"/>
</dbReference>
<dbReference type="NCBIfam" id="TIGR03284">
    <property type="entry name" value="thym_sym"/>
    <property type="match status" value="1"/>
</dbReference>
<dbReference type="PANTHER" id="PTHR11548:SF9">
    <property type="entry name" value="THYMIDYLATE SYNTHASE"/>
    <property type="match status" value="1"/>
</dbReference>
<dbReference type="PANTHER" id="PTHR11548">
    <property type="entry name" value="THYMIDYLATE SYNTHASE 1"/>
    <property type="match status" value="1"/>
</dbReference>
<dbReference type="Pfam" id="PF00303">
    <property type="entry name" value="Thymidylat_synt"/>
    <property type="match status" value="1"/>
</dbReference>
<dbReference type="PRINTS" id="PR00108">
    <property type="entry name" value="THYMDSNTHASE"/>
</dbReference>
<dbReference type="SUPFAM" id="SSF55831">
    <property type="entry name" value="Thymidylate synthase/dCMP hydroxymethylase"/>
    <property type="match status" value="1"/>
</dbReference>
<dbReference type="PROSITE" id="PS00091">
    <property type="entry name" value="THYMIDYLATE_SYNTHASE"/>
    <property type="match status" value="1"/>
</dbReference>
<protein>
    <recommendedName>
        <fullName evidence="1">Thymidylate synthase</fullName>
        <shortName evidence="1">TS</shortName>
        <shortName evidence="1">TSase</shortName>
        <ecNumber evidence="1">2.1.1.45</ecNumber>
    </recommendedName>
</protein>
<feature type="chain" id="PRO_1000201722" description="Thymidylate synthase">
    <location>
        <begin position="1"/>
        <end position="314"/>
    </location>
</feature>
<feature type="active site" description="Nucleophile" evidence="1">
    <location>
        <position position="196"/>
    </location>
</feature>
<feature type="binding site" description="in other chain" evidence="1">
    <location>
        <position position="21"/>
    </location>
    <ligand>
        <name>dUMP</name>
        <dbReference type="ChEBI" id="CHEBI:246422"/>
        <note>ligand shared between dimeric partners</note>
    </ligand>
</feature>
<feature type="binding site" evidence="1">
    <location>
        <begin position="176"/>
        <end position="177"/>
    </location>
    <ligand>
        <name>dUMP</name>
        <dbReference type="ChEBI" id="CHEBI:246422"/>
        <note>ligand shared between dimeric partners</note>
    </ligand>
</feature>
<feature type="binding site" description="in other chain" evidence="1">
    <location>
        <begin position="216"/>
        <end position="219"/>
    </location>
    <ligand>
        <name>dUMP</name>
        <dbReference type="ChEBI" id="CHEBI:246422"/>
        <note>ligand shared between dimeric partners</note>
    </ligand>
</feature>
<feature type="binding site" evidence="1">
    <location>
        <position position="219"/>
    </location>
    <ligand>
        <name>(6R)-5,10-methylene-5,6,7,8-tetrahydrofolate</name>
        <dbReference type="ChEBI" id="CHEBI:15636"/>
    </ligand>
</feature>
<feature type="binding site" description="in other chain" evidence="1">
    <location>
        <position position="227"/>
    </location>
    <ligand>
        <name>dUMP</name>
        <dbReference type="ChEBI" id="CHEBI:246422"/>
        <note>ligand shared between dimeric partners</note>
    </ligand>
</feature>
<feature type="binding site" description="in other chain" evidence="1">
    <location>
        <begin position="257"/>
        <end position="259"/>
    </location>
    <ligand>
        <name>dUMP</name>
        <dbReference type="ChEBI" id="CHEBI:246422"/>
        <note>ligand shared between dimeric partners</note>
    </ligand>
</feature>
<feature type="binding site" evidence="1">
    <location>
        <position position="313"/>
    </location>
    <ligand>
        <name>(6R)-5,10-methylene-5,6,7,8-tetrahydrofolate</name>
        <dbReference type="ChEBI" id="CHEBI:15636"/>
    </ligand>
</feature>
<sequence length="314" mass="36176">MKQYLDLEKYVLENGTQKGDRTGTGTISTFGYQMRFDLQEGFPIMTTKRVPFKLVVSELLWFLHGDTNIRYLLQHNNNIWNEWAFERFVKSDDYKGEDMTDFGLRAERDSAFKEVYQAEMEKFKARILEDEAFANKYGELGNIYGKQWREWKTSQGETIDQLADLIEMIKTNPNSRRLIVSAWNPKDIPNMALPPCHSLFQFYVADGKLSCQLYQRSADIFLGVPFNIASYALLTHLIAREVGLEVGEFIHTMGDAHLYNNHIEQVKEQLSRTPHKLPKLVLSDKPATIFDFDVADISLDGYNPDPAIKAPISV</sequence>
<accession>C1KWH4</accession>
<comment type="function">
    <text evidence="1">Catalyzes the reductive methylation of 2'-deoxyuridine-5'-monophosphate (dUMP) to 2'-deoxythymidine-5'-monophosphate (dTMP) while utilizing 5,10-methylenetetrahydrofolate (mTHF) as the methyl donor and reductant in the reaction, yielding dihydrofolate (DHF) as a by-product. This enzymatic reaction provides an intracellular de novo source of dTMP, an essential precursor for DNA biosynthesis.</text>
</comment>
<comment type="catalytic activity">
    <reaction evidence="1">
        <text>dUMP + (6R)-5,10-methylene-5,6,7,8-tetrahydrofolate = 7,8-dihydrofolate + dTMP</text>
        <dbReference type="Rhea" id="RHEA:12104"/>
        <dbReference type="ChEBI" id="CHEBI:15636"/>
        <dbReference type="ChEBI" id="CHEBI:57451"/>
        <dbReference type="ChEBI" id="CHEBI:63528"/>
        <dbReference type="ChEBI" id="CHEBI:246422"/>
        <dbReference type="EC" id="2.1.1.45"/>
    </reaction>
</comment>
<comment type="pathway">
    <text evidence="1">Pyrimidine metabolism; dTTP biosynthesis.</text>
</comment>
<comment type="subunit">
    <text evidence="1">Homodimer.</text>
</comment>
<comment type="subcellular location">
    <subcellularLocation>
        <location evidence="1">Cytoplasm</location>
    </subcellularLocation>
</comment>
<comment type="similarity">
    <text evidence="1">Belongs to the thymidylate synthase family. Bacterial-type ThyA subfamily.</text>
</comment>
<keyword id="KW-0963">Cytoplasm</keyword>
<keyword id="KW-0489">Methyltransferase</keyword>
<keyword id="KW-0545">Nucleotide biosynthesis</keyword>
<keyword id="KW-0808">Transferase</keyword>
<name>TYSY_LISMC</name>
<proteinExistence type="inferred from homology"/>